<protein>
    <recommendedName>
        <fullName evidence="1">Large ribosomal subunit protein uL29</fullName>
    </recommendedName>
    <alternativeName>
        <fullName evidence="2">50S ribosomal protein L29</fullName>
    </alternativeName>
</protein>
<proteinExistence type="inferred from homology"/>
<keyword id="KW-0687">Ribonucleoprotein</keyword>
<keyword id="KW-0689">Ribosomal protein</keyword>
<comment type="similarity">
    <text evidence="1">Belongs to the universal ribosomal protein uL29 family.</text>
</comment>
<name>RL29_ROSS1</name>
<feature type="chain" id="PRO_1000007592" description="Large ribosomal subunit protein uL29">
    <location>
        <begin position="1"/>
        <end position="71"/>
    </location>
</feature>
<dbReference type="EMBL" id="CP000686">
    <property type="protein sequence ID" value="ABQ89584.1"/>
    <property type="molecule type" value="Genomic_DNA"/>
</dbReference>
<dbReference type="RefSeq" id="WP_011955937.1">
    <property type="nucleotide sequence ID" value="NC_009523.1"/>
</dbReference>
<dbReference type="SMR" id="A5USI1"/>
<dbReference type="STRING" id="357808.RoseRS_1177"/>
<dbReference type="KEGG" id="rrs:RoseRS_1177"/>
<dbReference type="eggNOG" id="COG0255">
    <property type="taxonomic scope" value="Bacteria"/>
</dbReference>
<dbReference type="HOGENOM" id="CLU_158491_5_2_0"/>
<dbReference type="OrthoDB" id="9815192at2"/>
<dbReference type="Proteomes" id="UP000006554">
    <property type="component" value="Chromosome"/>
</dbReference>
<dbReference type="GO" id="GO:0022625">
    <property type="term" value="C:cytosolic large ribosomal subunit"/>
    <property type="evidence" value="ECO:0007669"/>
    <property type="project" value="TreeGrafter"/>
</dbReference>
<dbReference type="GO" id="GO:0003735">
    <property type="term" value="F:structural constituent of ribosome"/>
    <property type="evidence" value="ECO:0007669"/>
    <property type="project" value="InterPro"/>
</dbReference>
<dbReference type="GO" id="GO:0006412">
    <property type="term" value="P:translation"/>
    <property type="evidence" value="ECO:0007669"/>
    <property type="project" value="UniProtKB-UniRule"/>
</dbReference>
<dbReference type="CDD" id="cd00427">
    <property type="entry name" value="Ribosomal_L29_HIP"/>
    <property type="match status" value="1"/>
</dbReference>
<dbReference type="FunFam" id="1.10.287.310:FF:000001">
    <property type="entry name" value="50S ribosomal protein L29"/>
    <property type="match status" value="1"/>
</dbReference>
<dbReference type="Gene3D" id="1.10.287.310">
    <property type="match status" value="1"/>
</dbReference>
<dbReference type="HAMAP" id="MF_00374">
    <property type="entry name" value="Ribosomal_uL29"/>
    <property type="match status" value="1"/>
</dbReference>
<dbReference type="InterPro" id="IPR050063">
    <property type="entry name" value="Ribosomal_protein_uL29"/>
</dbReference>
<dbReference type="InterPro" id="IPR001854">
    <property type="entry name" value="Ribosomal_uL29"/>
</dbReference>
<dbReference type="InterPro" id="IPR036049">
    <property type="entry name" value="Ribosomal_uL29_sf"/>
</dbReference>
<dbReference type="NCBIfam" id="TIGR00012">
    <property type="entry name" value="L29"/>
    <property type="match status" value="1"/>
</dbReference>
<dbReference type="PANTHER" id="PTHR10916">
    <property type="entry name" value="60S RIBOSOMAL PROTEIN L35/50S RIBOSOMAL PROTEIN L29"/>
    <property type="match status" value="1"/>
</dbReference>
<dbReference type="PANTHER" id="PTHR10916:SF0">
    <property type="entry name" value="LARGE RIBOSOMAL SUBUNIT PROTEIN UL29C"/>
    <property type="match status" value="1"/>
</dbReference>
<dbReference type="Pfam" id="PF00831">
    <property type="entry name" value="Ribosomal_L29"/>
    <property type="match status" value="1"/>
</dbReference>
<dbReference type="SUPFAM" id="SSF46561">
    <property type="entry name" value="Ribosomal protein L29 (L29p)"/>
    <property type="match status" value="1"/>
</dbReference>
<sequence length="71" mass="8458">MKADELRKLDDQQLRAKLKECYEELFNLRFQQVMGKLTATGRPRVVRRDIARIKTILRERELGIEVQETGR</sequence>
<evidence type="ECO:0000255" key="1">
    <source>
        <dbReference type="HAMAP-Rule" id="MF_00374"/>
    </source>
</evidence>
<evidence type="ECO:0000305" key="2"/>
<accession>A5USI1</accession>
<reference key="1">
    <citation type="submission" date="2007-04" db="EMBL/GenBank/DDBJ databases">
        <title>Complete sequence of Roseiflexus sp. RS-1.</title>
        <authorList>
            <consortium name="US DOE Joint Genome Institute"/>
            <person name="Copeland A."/>
            <person name="Lucas S."/>
            <person name="Lapidus A."/>
            <person name="Barry K."/>
            <person name="Detter J.C."/>
            <person name="Glavina del Rio T."/>
            <person name="Hammon N."/>
            <person name="Israni S."/>
            <person name="Dalin E."/>
            <person name="Tice H."/>
            <person name="Pitluck S."/>
            <person name="Chertkov O."/>
            <person name="Brettin T."/>
            <person name="Bruce D."/>
            <person name="Han C."/>
            <person name="Schmutz J."/>
            <person name="Larimer F."/>
            <person name="Land M."/>
            <person name="Hauser L."/>
            <person name="Kyrpides N."/>
            <person name="Mikhailova N."/>
            <person name="Bryant D.A."/>
            <person name="Richardson P."/>
        </authorList>
    </citation>
    <scope>NUCLEOTIDE SEQUENCE [LARGE SCALE GENOMIC DNA]</scope>
    <source>
        <strain>RS-1</strain>
    </source>
</reference>
<gene>
    <name evidence="1" type="primary">rpmC</name>
    <name type="ordered locus">RoseRS_1177</name>
</gene>
<organism>
    <name type="scientific">Roseiflexus sp. (strain RS-1)</name>
    <dbReference type="NCBI Taxonomy" id="357808"/>
    <lineage>
        <taxon>Bacteria</taxon>
        <taxon>Bacillati</taxon>
        <taxon>Chloroflexota</taxon>
        <taxon>Chloroflexia</taxon>
        <taxon>Chloroflexales</taxon>
        <taxon>Roseiflexineae</taxon>
        <taxon>Roseiflexaceae</taxon>
        <taxon>Roseiflexus</taxon>
    </lineage>
</organism>